<keyword id="KW-0238">DNA-binding</keyword>
<keyword id="KW-1185">Reference proteome</keyword>
<keyword id="KW-0804">Transcription</keyword>
<keyword id="KW-0805">Transcription regulation</keyword>
<protein>
    <recommendedName>
        <fullName>Uncharacterized HTH-type transcriptional regulator MJ0568</fullName>
    </recommendedName>
</protein>
<accession>Q57988</accession>
<dbReference type="EMBL" id="L77117">
    <property type="protein sequence ID" value="AAB98562.1"/>
    <property type="molecule type" value="Genomic_DNA"/>
</dbReference>
<dbReference type="PIR" id="H64370">
    <property type="entry name" value="H64370"/>
</dbReference>
<dbReference type="RefSeq" id="WP_010870072.1">
    <property type="nucleotide sequence ID" value="NC_000909.1"/>
</dbReference>
<dbReference type="SMR" id="Q57988"/>
<dbReference type="FunCoup" id="Q57988">
    <property type="interactions" value="2"/>
</dbReference>
<dbReference type="STRING" id="243232.MJ_0568"/>
<dbReference type="PaxDb" id="243232-MJ_0568"/>
<dbReference type="EnsemblBacteria" id="AAB98562">
    <property type="protein sequence ID" value="AAB98562"/>
    <property type="gene ID" value="MJ_0568"/>
</dbReference>
<dbReference type="GeneID" id="1451433"/>
<dbReference type="KEGG" id="mja:MJ_0568"/>
<dbReference type="eggNOG" id="arCOG02100">
    <property type="taxonomic scope" value="Archaea"/>
</dbReference>
<dbReference type="HOGENOM" id="CLU_069532_4_1_2"/>
<dbReference type="InParanoid" id="Q57988"/>
<dbReference type="OrthoDB" id="24735at2157"/>
<dbReference type="PhylomeDB" id="Q57988"/>
<dbReference type="Proteomes" id="UP000000805">
    <property type="component" value="Chromosome"/>
</dbReference>
<dbReference type="GO" id="GO:0003677">
    <property type="term" value="F:DNA binding"/>
    <property type="evidence" value="ECO:0007669"/>
    <property type="project" value="UniProtKB-KW"/>
</dbReference>
<dbReference type="GO" id="GO:0003700">
    <property type="term" value="F:DNA-binding transcription factor activity"/>
    <property type="evidence" value="ECO:0007669"/>
    <property type="project" value="InterPro"/>
</dbReference>
<dbReference type="GO" id="GO:0046983">
    <property type="term" value="F:protein dimerization activity"/>
    <property type="evidence" value="ECO:0007669"/>
    <property type="project" value="InterPro"/>
</dbReference>
<dbReference type="GO" id="GO:0046914">
    <property type="term" value="F:transition metal ion binding"/>
    <property type="evidence" value="ECO:0007669"/>
    <property type="project" value="InterPro"/>
</dbReference>
<dbReference type="FunFam" id="1.10.10.10:FF:000189">
    <property type="entry name" value="HTH-type transcriptional regulator MntR"/>
    <property type="match status" value="1"/>
</dbReference>
<dbReference type="FunFam" id="1.10.60.10:FF:000005">
    <property type="entry name" value="Transcriptional regulator MntR protein"/>
    <property type="match status" value="1"/>
</dbReference>
<dbReference type="Gene3D" id="1.10.60.10">
    <property type="entry name" value="Iron dependent repressor, metal binding and dimerisation domain"/>
    <property type="match status" value="1"/>
</dbReference>
<dbReference type="Gene3D" id="1.10.10.10">
    <property type="entry name" value="Winged helix-like DNA-binding domain superfamily/Winged helix DNA-binding domain"/>
    <property type="match status" value="1"/>
</dbReference>
<dbReference type="InterPro" id="IPR050536">
    <property type="entry name" value="DtxR_MntR_Metal-Reg"/>
</dbReference>
<dbReference type="InterPro" id="IPR001367">
    <property type="entry name" value="Fe_dep_repressor"/>
</dbReference>
<dbReference type="InterPro" id="IPR036421">
    <property type="entry name" value="Fe_dep_repressor_sf"/>
</dbReference>
<dbReference type="InterPro" id="IPR022687">
    <property type="entry name" value="HTH_DTXR"/>
</dbReference>
<dbReference type="InterPro" id="IPR022689">
    <property type="entry name" value="Iron_dep_repressor"/>
</dbReference>
<dbReference type="InterPro" id="IPR036388">
    <property type="entry name" value="WH-like_DNA-bd_sf"/>
</dbReference>
<dbReference type="InterPro" id="IPR036390">
    <property type="entry name" value="WH_DNA-bd_sf"/>
</dbReference>
<dbReference type="PANTHER" id="PTHR33238">
    <property type="entry name" value="IRON (METAL) DEPENDENT REPRESSOR, DTXR FAMILY"/>
    <property type="match status" value="1"/>
</dbReference>
<dbReference type="PANTHER" id="PTHR33238:SF7">
    <property type="entry name" value="IRON-DEPENDENT TRANSCRIPTIONAL REGULATOR"/>
    <property type="match status" value="1"/>
</dbReference>
<dbReference type="Pfam" id="PF02742">
    <property type="entry name" value="Fe_dep_repr_C"/>
    <property type="match status" value="1"/>
</dbReference>
<dbReference type="Pfam" id="PF01325">
    <property type="entry name" value="Fe_dep_repress"/>
    <property type="match status" value="1"/>
</dbReference>
<dbReference type="SMART" id="SM00529">
    <property type="entry name" value="HTH_DTXR"/>
    <property type="match status" value="1"/>
</dbReference>
<dbReference type="SUPFAM" id="SSF46785">
    <property type="entry name" value="Winged helix' DNA-binding domain"/>
    <property type="match status" value="1"/>
</dbReference>
<dbReference type="PROSITE" id="PS50944">
    <property type="entry name" value="HTH_DTXR"/>
    <property type="match status" value="1"/>
</dbReference>
<feature type="chain" id="PRO_0000201124" description="Uncharacterized HTH-type transcriptional regulator MJ0568">
    <location>
        <begin position="1"/>
        <end position="125"/>
    </location>
</feature>
<feature type="domain" description="HTH dtxR-type" evidence="1">
    <location>
        <begin position="1"/>
        <end position="63"/>
    </location>
</feature>
<proteinExistence type="inferred from homology"/>
<comment type="similarity">
    <text evidence="2">Belongs to the DtxR/MntR family.</text>
</comment>
<evidence type="ECO:0000255" key="1">
    <source>
        <dbReference type="PROSITE-ProRule" id="PRU00296"/>
    </source>
</evidence>
<evidence type="ECO:0000305" key="2"/>
<name>Y568_METJA</name>
<sequence length="125" mass="14588">MSQSIEDYLERIYLFIKENNRPIKTTELAKLLNIKPSAVTNMAKKLHRLGYVNYEPYIGITLTEKGIEEAKKILDKHKTIKIFLVEFLGLDEKTASEEACKLEHALSDEILERLKIFMEKFKDKV</sequence>
<gene>
    <name type="ordered locus">MJ0568</name>
</gene>
<organism>
    <name type="scientific">Methanocaldococcus jannaschii (strain ATCC 43067 / DSM 2661 / JAL-1 / JCM 10045 / NBRC 100440)</name>
    <name type="common">Methanococcus jannaschii</name>
    <dbReference type="NCBI Taxonomy" id="243232"/>
    <lineage>
        <taxon>Archaea</taxon>
        <taxon>Methanobacteriati</taxon>
        <taxon>Methanobacteriota</taxon>
        <taxon>Methanomada group</taxon>
        <taxon>Methanococci</taxon>
        <taxon>Methanococcales</taxon>
        <taxon>Methanocaldococcaceae</taxon>
        <taxon>Methanocaldococcus</taxon>
    </lineage>
</organism>
<reference key="1">
    <citation type="journal article" date="1996" name="Science">
        <title>Complete genome sequence of the methanogenic archaeon, Methanococcus jannaschii.</title>
        <authorList>
            <person name="Bult C.J."/>
            <person name="White O."/>
            <person name="Olsen G.J."/>
            <person name="Zhou L."/>
            <person name="Fleischmann R.D."/>
            <person name="Sutton G.G."/>
            <person name="Blake J.A."/>
            <person name="FitzGerald L.M."/>
            <person name="Clayton R.A."/>
            <person name="Gocayne J.D."/>
            <person name="Kerlavage A.R."/>
            <person name="Dougherty B.A."/>
            <person name="Tomb J.-F."/>
            <person name="Adams M.D."/>
            <person name="Reich C.I."/>
            <person name="Overbeek R."/>
            <person name="Kirkness E.F."/>
            <person name="Weinstock K.G."/>
            <person name="Merrick J.M."/>
            <person name="Glodek A."/>
            <person name="Scott J.L."/>
            <person name="Geoghagen N.S.M."/>
            <person name="Weidman J.F."/>
            <person name="Fuhrmann J.L."/>
            <person name="Nguyen D."/>
            <person name="Utterback T.R."/>
            <person name="Kelley J.M."/>
            <person name="Peterson J.D."/>
            <person name="Sadow P.W."/>
            <person name="Hanna M.C."/>
            <person name="Cotton M.D."/>
            <person name="Roberts K.M."/>
            <person name="Hurst M.A."/>
            <person name="Kaine B.P."/>
            <person name="Borodovsky M."/>
            <person name="Klenk H.-P."/>
            <person name="Fraser C.M."/>
            <person name="Smith H.O."/>
            <person name="Woese C.R."/>
            <person name="Venter J.C."/>
        </authorList>
    </citation>
    <scope>NUCLEOTIDE SEQUENCE [LARGE SCALE GENOMIC DNA]</scope>
    <source>
        <strain>ATCC 43067 / DSM 2661 / JAL-1 / JCM 10045 / NBRC 100440</strain>
    </source>
</reference>